<proteinExistence type="evidence at protein level"/>
<comment type="function">
    <text evidence="1">RNA-binding factor that positively regulates gene expression by prohibiting miRNA-mediated gene suppression (By similarity). Relieves miRNA repression in germline cells (By similarity). Prohibits the function of several miRNAs by blocking the accessibility of target mRNAs (By similarity). Sequence-specific RNA-binding factor that binds specifically to U-rich regions (URRs) in the 3' untranslated region (3'-UTR) of several mRNAs (By similarity). Does not bind to miRNAs (By similarity). Isoform 1 may play a role during primordial germ cell (PGC) survival. However, does not seem to be essential for PGC migration.</text>
</comment>
<comment type="subunit">
    <text evidence="5">Interacts with APOBEC3.</text>
</comment>
<comment type="subcellular location">
    <subcellularLocation>
        <location>Nucleus</location>
    </subcellularLocation>
    <subcellularLocation>
        <location>Cytoplasm</location>
    </subcellularLocation>
    <text evidence="1">Perinuclear germ granules, also called germ plasm or chromatoid body (By similarity). Colocalizes in perinuclear sites with APOBEC3.</text>
</comment>
<comment type="alternative products">
    <event type="alternative splicing"/>
    <isoform>
        <id>Q6VY05-1</id>
        <name>1</name>
        <name>DND1-alpha</name>
        <sequence type="displayed"/>
    </isoform>
    <isoform>
        <id>Q6VY05-2</id>
        <name>2</name>
        <name>DND1-beta</name>
        <sequence type="described" ref="VSP_012943"/>
    </isoform>
</comment>
<comment type="tissue specificity">
    <text evidence="3 4">Isoform 1 and isoform 2 are expressed in testis. Isoform 1 is expressed continuously in post natal (PN) testis although levels are low between PN1 to PN6. Isoform 2 is expressed from PN 20 onwards. Isoform 2 is strongly expressed in meiotic and in post-meiotic germ cells of the testis with highest expression at the elongated spermatid stage (at protein level). Expressed in testis and heart. Expressed in germ cells and genital ridges. Not detected in testicular tumors.</text>
</comment>
<comment type="developmental stage">
    <text evidence="3 4 5">Isoform 1, but not isoform 2, is expressed in embryos at 13.5 and 15.5 dpc. Isoform 1, but not isoform 2, is expressed in primordial gonads at 13.5 and 15.5 dpc. Isoform 1, but not isoform 2, is expressed in ES cell lines. Isoform 1, but not isoform 2, is expressed in embryonic germ (EG) cells (at protein level). Detected in the embryo and allantoic bud at 7.5 dpc, in the neuroectoderm at 8.5 dpc, and widespread at 9.5 dpc, including the neural tube, head mesenchyme, first branchial arch and the hindgut, through which primordial germ cells are migrating. At 11.5 dpc, also expressed in the XY and XX genital ridges. Expressed in genital ridges at 13.5 dpc. Between 12.5 to 14.5 dpc, up-regulated in the testis cords of the XY gonads and down-regulated in XX gonads. Down-regulation occurs progressively as an anterior to posterior wave.</text>
</comment>
<comment type="disease">
    <text evidence="3">Defects in Dnd1 are the cause of the Ter mutation phenotype. Ter mice are characterized by primordial germ cell loss and susceptibility to spontaneous testicular germ cell tumors (TGCT). They are sterile, but viable. Isoform 1 defects may be the cause of tumor development.</text>
</comment>
<comment type="miscellaneous">
    <molecule>Isoform 2</molecule>
    <text evidence="7">May be due to intron retention.</text>
</comment>
<reference key="1">
    <citation type="journal article" date="2003" name="Curr. Biol.">
        <title>Dead end, a novel vertebrate germ plasm component, is required for zebrafish primordial germ cell migration and survival.</title>
        <authorList>
            <person name="Weidinger G."/>
            <person name="Stebler J."/>
            <person name="Slanchev K."/>
            <person name="Dumstrei K."/>
            <person name="Wise C."/>
            <person name="Lovell-Badge R."/>
            <person name="Thisse C."/>
            <person name="Thisse B."/>
            <person name="Raz E."/>
        </authorList>
    </citation>
    <scope>NUCLEOTIDE SEQUENCE [MRNA] (ISOFORM 1)</scope>
    <source>
        <strain>C57BL/6J</strain>
        <tissue>Testis</tissue>
    </source>
</reference>
<reference key="2">
    <citation type="journal article" date="2004" name="Genome Res.">
        <title>The status, quality, and expansion of the NIH full-length cDNA project: the Mammalian Gene Collection (MGC).</title>
        <authorList>
            <consortium name="The MGC Project Team"/>
        </authorList>
    </citation>
    <scope>NUCLEOTIDE SEQUENCE [LARGE SCALE MRNA] (ISOFORM 2)</scope>
    <source>
        <strain>C57BL/6J</strain>
        <tissue>Thymus</tissue>
    </source>
</reference>
<reference key="3">
    <citation type="journal article" date="2005" name="Nature">
        <title>The Ter mutation in the dead end gene causes germ cell loss and testicular germ cell tumours.</title>
        <authorList>
            <person name="Youngren K.K."/>
            <person name="Coveney D."/>
            <person name="Peng X."/>
            <person name="Bhattacharya C."/>
            <person name="Schmidt L.S."/>
            <person name="Nickerson M.L."/>
            <person name="Lamb B.T."/>
            <person name="Deng J.M."/>
            <person name="Behringer R.R."/>
            <person name="Capel B."/>
            <person name="Rubin E.M."/>
            <person name="Nadeau J.H."/>
            <person name="Matin A."/>
        </authorList>
    </citation>
    <scope>TISSUE SPECIFICITY</scope>
    <scope>DEVELOPMENTAL STAGE</scope>
    <scope>DISEASE</scope>
</reference>
<reference key="4">
    <citation type="journal article" date="2007" name="Biochem. Biophys. Res. Commun.">
        <title>The mouse dead-end gene isoform alpha is necessary for germ cell and embryonic viability.</title>
        <authorList>
            <person name="Bhattacharya C."/>
            <person name="Aggarwal S."/>
            <person name="Zhu R."/>
            <person name="Kumar M."/>
            <person name="Zhao M."/>
            <person name="Meistrich M.L."/>
            <person name="Matin A."/>
        </authorList>
    </citation>
    <scope>ALTERNATIVE SPLICING (ISOFORMS 1 AND 2)</scope>
    <scope>SUBCELLULAR LOCATION</scope>
    <scope>TISSUE SPECIFICITY</scope>
    <scope>DEVELOPMENTAL STAGE</scope>
</reference>
<reference key="5">
    <citation type="journal article" date="2008" name="PLoS ONE">
        <title>Mouse apolipoprotein B editing complex 3 (APOBEC3) is expressed in germ cells and interacts with dead-end (DND1).</title>
        <authorList>
            <person name="Bhattacharya C."/>
            <person name="Aggarwal S."/>
            <person name="Kumar M."/>
            <person name="Ali A."/>
            <person name="Matin A."/>
        </authorList>
    </citation>
    <scope>INTERACTION WITH APOBEC3</scope>
    <scope>SUBCELLULAR LOCATION</scope>
    <scope>DEVELOPMENTAL STAGE</scope>
</reference>
<reference key="6">
    <citation type="journal article" date="2014" name="Mol. Cell. Proteomics">
        <title>Immunoaffinity enrichment and mass spectrometry analysis of protein methylation.</title>
        <authorList>
            <person name="Guo A."/>
            <person name="Gu H."/>
            <person name="Zhou J."/>
            <person name="Mulhern D."/>
            <person name="Wang Y."/>
            <person name="Lee K.A."/>
            <person name="Yang V."/>
            <person name="Aguiar M."/>
            <person name="Kornhauser J."/>
            <person name="Jia X."/>
            <person name="Ren J."/>
            <person name="Beausoleil S.A."/>
            <person name="Silva J.C."/>
            <person name="Vemulapalli V."/>
            <person name="Bedford M.T."/>
            <person name="Comb M.J."/>
        </authorList>
    </citation>
    <scope>METHYLATION [LARGE SCALE ANALYSIS] AT ARG-336</scope>
    <scope>IDENTIFICATION BY MASS SPECTROMETRY [LARGE SCALE ANALYSIS]</scope>
    <source>
        <tissue>Brain</tissue>
    </source>
</reference>
<feature type="chain" id="PRO_0000081569" description="Dead end protein homolog 1">
    <location>
        <begin position="1"/>
        <end position="352"/>
    </location>
</feature>
<feature type="domain" description="RRM 1" evidence="2">
    <location>
        <begin position="58"/>
        <end position="136"/>
    </location>
</feature>
<feature type="domain" description="RRM 2" evidence="2">
    <location>
        <begin position="138"/>
        <end position="218"/>
    </location>
</feature>
<feature type="modified residue" description="Omega-N-methylarginine" evidence="8">
    <location>
        <position position="336"/>
    </location>
</feature>
<feature type="splice variant" id="VSP_012943" description="In isoform 2." evidence="6">
    <original>MQSKRECEQWCERVNPENKAALEAWVRETGIRLVQVNGQRKYGGP</original>
    <variation>MVSLPSPPLPPPPSFILELKNILVDHSNQQNPF</variation>
    <location>
        <begin position="1"/>
        <end position="45"/>
    </location>
</feature>
<keyword id="KW-0025">Alternative splicing</keyword>
<keyword id="KW-0963">Cytoplasm</keyword>
<keyword id="KW-0217">Developmental protein</keyword>
<keyword id="KW-0488">Methylation</keyword>
<keyword id="KW-0539">Nucleus</keyword>
<keyword id="KW-1185">Reference proteome</keyword>
<keyword id="KW-0677">Repeat</keyword>
<keyword id="KW-0694">RNA-binding</keyword>
<sequence length="352" mass="39076">MQSKRECEQWCERVNPENKAALEAWVRETGIRLVQVNGQRKYGGPPPGWVGSPPPSGSEVYIGRLPQDVYEHQLIPLFQRVGRLYEFRLMMTFSGLNRGFAYARYSSRRGAQAAIATLHNHQLRPSCQLLVCRSTEKCELTVDGLPLSLNRRALLLALQPFGPCLQETLLLPSPGSAPSQIALLKFSTHRAAAMAKKALVEGQSRLCGEQVAVEWLKPDLKQHFRQQLAGPSLRFLRPDVSQLTQTREKLGSQGARAALQLLCQRMKLGSPVFLTKCLGTGPAGWHRFWYQVVIPGHPVPFSGLIWVVLASDWQDGHEVAKDAVSAQLLEALSEPRTSLWSPGAEAGTMVKQ</sequence>
<evidence type="ECO:0000250" key="1"/>
<evidence type="ECO:0000255" key="2">
    <source>
        <dbReference type="PROSITE-ProRule" id="PRU00176"/>
    </source>
</evidence>
<evidence type="ECO:0000269" key="3">
    <source>
    </source>
</evidence>
<evidence type="ECO:0000269" key="4">
    <source>
    </source>
</evidence>
<evidence type="ECO:0000269" key="5">
    <source>
    </source>
</evidence>
<evidence type="ECO:0000303" key="6">
    <source>
    </source>
</evidence>
<evidence type="ECO:0000305" key="7"/>
<evidence type="ECO:0007744" key="8">
    <source>
    </source>
</evidence>
<gene>
    <name type="primary">Dnd1</name>
    <name type="synonym">Rbms4</name>
    <name type="synonym">Ter</name>
</gene>
<name>DND1_MOUSE</name>
<organism>
    <name type="scientific">Mus musculus</name>
    <name type="common">Mouse</name>
    <dbReference type="NCBI Taxonomy" id="10090"/>
    <lineage>
        <taxon>Eukaryota</taxon>
        <taxon>Metazoa</taxon>
        <taxon>Chordata</taxon>
        <taxon>Craniata</taxon>
        <taxon>Vertebrata</taxon>
        <taxon>Euteleostomi</taxon>
        <taxon>Mammalia</taxon>
        <taxon>Eutheria</taxon>
        <taxon>Euarchontoglires</taxon>
        <taxon>Glires</taxon>
        <taxon>Rodentia</taxon>
        <taxon>Myomorpha</taxon>
        <taxon>Muroidea</taxon>
        <taxon>Muridae</taxon>
        <taxon>Murinae</taxon>
        <taxon>Mus</taxon>
        <taxon>Mus</taxon>
    </lineage>
</organism>
<protein>
    <recommendedName>
        <fullName>Dead end protein homolog 1</fullName>
    </recommendedName>
    <alternativeName>
        <fullName>RNA-binding motif, single-stranded-interacting protein 4</fullName>
    </alternativeName>
</protein>
<accession>Q6VY05</accession>
<accession>Q8CFK7</accession>
<dbReference type="EMBL" id="AY321066">
    <property type="protein sequence ID" value="AAQ63636.1"/>
    <property type="molecule type" value="mRNA"/>
</dbReference>
<dbReference type="EMBL" id="BC034897">
    <property type="protein sequence ID" value="AAH34897.1"/>
    <property type="molecule type" value="mRNA"/>
</dbReference>
<dbReference type="CCDS" id="CCDS29163.2">
    <molecule id="Q6VY05-1"/>
</dbReference>
<dbReference type="RefSeq" id="NP_775559.2">
    <molecule id="Q6VY05-1"/>
    <property type="nucleotide sequence ID" value="NM_173383.2"/>
</dbReference>
<dbReference type="SMR" id="Q6VY05"/>
<dbReference type="BioGRID" id="229409">
    <property type="interactions" value="2"/>
</dbReference>
<dbReference type="FunCoup" id="Q6VY05">
    <property type="interactions" value="1817"/>
</dbReference>
<dbReference type="STRING" id="10090.ENSMUSP00000054412"/>
<dbReference type="iPTMnet" id="Q6VY05"/>
<dbReference type="PhosphoSitePlus" id="Q6VY05"/>
<dbReference type="PaxDb" id="10090-ENSMUSP00000054412"/>
<dbReference type="PeptideAtlas" id="Q6VY05"/>
<dbReference type="ProteomicsDB" id="279558">
    <molecule id="Q6VY05-1"/>
</dbReference>
<dbReference type="ProteomicsDB" id="279559">
    <molecule id="Q6VY05-2"/>
</dbReference>
<dbReference type="Antibodypedia" id="49888">
    <property type="antibodies" value="233 antibodies from 24 providers"/>
</dbReference>
<dbReference type="Ensembl" id="ENSMUST00000061522.8">
    <molecule id="Q6VY05-1"/>
    <property type="protein sequence ID" value="ENSMUSP00000054412.8"/>
    <property type="gene ID" value="ENSMUSG00000044595.11"/>
</dbReference>
<dbReference type="GeneID" id="213236"/>
<dbReference type="KEGG" id="mmu:213236"/>
<dbReference type="UCSC" id="uc008eom.1">
    <molecule id="Q6VY05-2"/>
    <property type="organism name" value="mouse"/>
</dbReference>
<dbReference type="UCSC" id="uc008eon.1">
    <molecule id="Q6VY05-1"/>
    <property type="organism name" value="mouse"/>
</dbReference>
<dbReference type="AGR" id="MGI:2447763"/>
<dbReference type="CTD" id="373863"/>
<dbReference type="MGI" id="MGI:2447763">
    <property type="gene designation" value="Dnd1"/>
</dbReference>
<dbReference type="VEuPathDB" id="HostDB:ENSMUSG00000044595"/>
<dbReference type="eggNOG" id="KOG0117">
    <property type="taxonomic scope" value="Eukaryota"/>
</dbReference>
<dbReference type="GeneTree" id="ENSGT00940000159225"/>
<dbReference type="HOGENOM" id="CLU_022960_0_0_1"/>
<dbReference type="InParanoid" id="Q6VY05"/>
<dbReference type="OMA" id="CERVNPV"/>
<dbReference type="OrthoDB" id="3800936at2759"/>
<dbReference type="PhylomeDB" id="Q6VY05"/>
<dbReference type="TreeFam" id="TF314932"/>
<dbReference type="BioGRID-ORCS" id="213236">
    <property type="hits" value="2 hits in 79 CRISPR screens"/>
</dbReference>
<dbReference type="PRO" id="PR:Q6VY05"/>
<dbReference type="Proteomes" id="UP000000589">
    <property type="component" value="Chromosome 18"/>
</dbReference>
<dbReference type="RNAct" id="Q6VY05">
    <property type="molecule type" value="protein"/>
</dbReference>
<dbReference type="Bgee" id="ENSMUSG00000044595">
    <property type="expression patterns" value="Expressed in gonadal ridge and 95 other cell types or tissues"/>
</dbReference>
<dbReference type="GO" id="GO:0005737">
    <property type="term" value="C:cytoplasm"/>
    <property type="evidence" value="ECO:0000314"/>
    <property type="project" value="UniProtKB"/>
</dbReference>
<dbReference type="GO" id="GO:0005829">
    <property type="term" value="C:cytosol"/>
    <property type="evidence" value="ECO:0007669"/>
    <property type="project" value="Ensembl"/>
</dbReference>
<dbReference type="GO" id="GO:0005925">
    <property type="term" value="C:focal adhesion"/>
    <property type="evidence" value="ECO:0007669"/>
    <property type="project" value="Ensembl"/>
</dbReference>
<dbReference type="GO" id="GO:0005654">
    <property type="term" value="C:nucleoplasm"/>
    <property type="evidence" value="ECO:0007669"/>
    <property type="project" value="Ensembl"/>
</dbReference>
<dbReference type="GO" id="GO:0005634">
    <property type="term" value="C:nucleus"/>
    <property type="evidence" value="ECO:0000250"/>
    <property type="project" value="UniProtKB"/>
</dbReference>
<dbReference type="GO" id="GO:0003730">
    <property type="term" value="F:mRNA 3'-UTR binding"/>
    <property type="evidence" value="ECO:0000250"/>
    <property type="project" value="UniProtKB"/>
</dbReference>
<dbReference type="GO" id="GO:0061158">
    <property type="term" value="P:3'-UTR-mediated mRNA destabilization"/>
    <property type="evidence" value="ECO:0007669"/>
    <property type="project" value="Ensembl"/>
</dbReference>
<dbReference type="GO" id="GO:0007281">
    <property type="term" value="P:germ cell development"/>
    <property type="evidence" value="ECO:0000315"/>
    <property type="project" value="MGI"/>
</dbReference>
<dbReference type="GO" id="GO:0060965">
    <property type="term" value="P:negative regulation of miRNA-mediated gene silencing"/>
    <property type="evidence" value="ECO:0000250"/>
    <property type="project" value="UniProtKB"/>
</dbReference>
<dbReference type="GO" id="GO:0007283">
    <property type="term" value="P:spermatogenesis"/>
    <property type="evidence" value="ECO:0007669"/>
    <property type="project" value="Ensembl"/>
</dbReference>
<dbReference type="CDD" id="cd20313">
    <property type="entry name" value="DSRM_DND1"/>
    <property type="match status" value="1"/>
</dbReference>
<dbReference type="CDD" id="cd12487">
    <property type="entry name" value="RRM1_DND1"/>
    <property type="match status" value="1"/>
</dbReference>
<dbReference type="FunFam" id="3.30.70.330:FF:000370">
    <property type="entry name" value="Dead end protein homolog 1"/>
    <property type="match status" value="1"/>
</dbReference>
<dbReference type="FunFam" id="3.30.70.330:FF:000390">
    <property type="entry name" value="dead end protein homolog 1"/>
    <property type="match status" value="1"/>
</dbReference>
<dbReference type="Gene3D" id="3.30.70.330">
    <property type="match status" value="2"/>
</dbReference>
<dbReference type="InterPro" id="IPR044448">
    <property type="entry name" value="DND1_DSRM"/>
</dbReference>
<dbReference type="InterPro" id="IPR034414">
    <property type="entry name" value="DND1_RRM1"/>
</dbReference>
<dbReference type="InterPro" id="IPR012677">
    <property type="entry name" value="Nucleotide-bd_a/b_plait_sf"/>
</dbReference>
<dbReference type="InterPro" id="IPR035979">
    <property type="entry name" value="RBD_domain_sf"/>
</dbReference>
<dbReference type="InterPro" id="IPR000504">
    <property type="entry name" value="RRM_dom"/>
</dbReference>
<dbReference type="PANTHER" id="PTHR21245">
    <property type="entry name" value="HETEROGENEOUS NUCLEAR RIBONUCLEOPROTEIN"/>
    <property type="match status" value="1"/>
</dbReference>
<dbReference type="Pfam" id="PF14709">
    <property type="entry name" value="DND1_DSRM"/>
    <property type="match status" value="1"/>
</dbReference>
<dbReference type="Pfam" id="PF00076">
    <property type="entry name" value="RRM_1"/>
    <property type="match status" value="1"/>
</dbReference>
<dbReference type="SMART" id="SM00360">
    <property type="entry name" value="RRM"/>
    <property type="match status" value="2"/>
</dbReference>
<dbReference type="SUPFAM" id="SSF54928">
    <property type="entry name" value="RNA-binding domain, RBD"/>
    <property type="match status" value="1"/>
</dbReference>
<dbReference type="PROSITE" id="PS50102">
    <property type="entry name" value="RRM"/>
    <property type="match status" value="1"/>
</dbReference>